<name>SYT_BURM1</name>
<dbReference type="EC" id="6.1.1.3" evidence="1"/>
<dbReference type="EMBL" id="CP000868">
    <property type="protein sequence ID" value="ABX15467.1"/>
    <property type="molecule type" value="Genomic_DNA"/>
</dbReference>
<dbReference type="EMBL" id="AP009385">
    <property type="protein sequence ID" value="BAG43392.1"/>
    <property type="molecule type" value="Genomic_DNA"/>
</dbReference>
<dbReference type="RefSeq" id="WP_012213485.1">
    <property type="nucleotide sequence ID" value="NC_010084.1"/>
</dbReference>
<dbReference type="SMR" id="A9ABF9"/>
<dbReference type="STRING" id="395019.BMULJ_01461"/>
<dbReference type="KEGG" id="bmj:BMULJ_01461"/>
<dbReference type="KEGG" id="bmu:Bmul_1779"/>
<dbReference type="eggNOG" id="COG0441">
    <property type="taxonomic scope" value="Bacteria"/>
</dbReference>
<dbReference type="HOGENOM" id="CLU_008554_0_1_4"/>
<dbReference type="Proteomes" id="UP000008815">
    <property type="component" value="Chromosome 1"/>
</dbReference>
<dbReference type="GO" id="GO:0005829">
    <property type="term" value="C:cytosol"/>
    <property type="evidence" value="ECO:0007669"/>
    <property type="project" value="TreeGrafter"/>
</dbReference>
<dbReference type="GO" id="GO:0005524">
    <property type="term" value="F:ATP binding"/>
    <property type="evidence" value="ECO:0007669"/>
    <property type="project" value="UniProtKB-UniRule"/>
</dbReference>
<dbReference type="GO" id="GO:0046872">
    <property type="term" value="F:metal ion binding"/>
    <property type="evidence" value="ECO:0007669"/>
    <property type="project" value="UniProtKB-KW"/>
</dbReference>
<dbReference type="GO" id="GO:0004829">
    <property type="term" value="F:threonine-tRNA ligase activity"/>
    <property type="evidence" value="ECO:0007669"/>
    <property type="project" value="UniProtKB-UniRule"/>
</dbReference>
<dbReference type="GO" id="GO:0000049">
    <property type="term" value="F:tRNA binding"/>
    <property type="evidence" value="ECO:0007669"/>
    <property type="project" value="UniProtKB-KW"/>
</dbReference>
<dbReference type="GO" id="GO:0006435">
    <property type="term" value="P:threonyl-tRNA aminoacylation"/>
    <property type="evidence" value="ECO:0007669"/>
    <property type="project" value="UniProtKB-UniRule"/>
</dbReference>
<dbReference type="CDD" id="cd01667">
    <property type="entry name" value="TGS_ThrRS"/>
    <property type="match status" value="1"/>
</dbReference>
<dbReference type="CDD" id="cd00860">
    <property type="entry name" value="ThrRS_anticodon"/>
    <property type="match status" value="1"/>
</dbReference>
<dbReference type="CDD" id="cd00771">
    <property type="entry name" value="ThrRS_core"/>
    <property type="match status" value="1"/>
</dbReference>
<dbReference type="FunFam" id="3.10.20.30:FF:000005">
    <property type="entry name" value="Threonine--tRNA ligase"/>
    <property type="match status" value="1"/>
</dbReference>
<dbReference type="FunFam" id="3.30.54.20:FF:000002">
    <property type="entry name" value="Threonine--tRNA ligase"/>
    <property type="match status" value="1"/>
</dbReference>
<dbReference type="FunFam" id="3.30.930.10:FF:000002">
    <property type="entry name" value="Threonine--tRNA ligase"/>
    <property type="match status" value="1"/>
</dbReference>
<dbReference type="FunFam" id="3.40.50.800:FF:000001">
    <property type="entry name" value="Threonine--tRNA ligase"/>
    <property type="match status" value="1"/>
</dbReference>
<dbReference type="FunFam" id="3.30.980.10:FF:000005">
    <property type="entry name" value="Threonyl-tRNA synthetase, mitochondrial"/>
    <property type="match status" value="1"/>
</dbReference>
<dbReference type="Gene3D" id="3.10.20.30">
    <property type="match status" value="1"/>
</dbReference>
<dbReference type="Gene3D" id="3.30.54.20">
    <property type="match status" value="1"/>
</dbReference>
<dbReference type="Gene3D" id="3.40.50.800">
    <property type="entry name" value="Anticodon-binding domain"/>
    <property type="match status" value="1"/>
</dbReference>
<dbReference type="Gene3D" id="3.30.930.10">
    <property type="entry name" value="Bira Bifunctional Protein, Domain 2"/>
    <property type="match status" value="1"/>
</dbReference>
<dbReference type="Gene3D" id="3.30.980.10">
    <property type="entry name" value="Threonyl-trna Synthetase, Chain A, domain 2"/>
    <property type="match status" value="1"/>
</dbReference>
<dbReference type="HAMAP" id="MF_00184">
    <property type="entry name" value="Thr_tRNA_synth"/>
    <property type="match status" value="1"/>
</dbReference>
<dbReference type="InterPro" id="IPR002314">
    <property type="entry name" value="aa-tRNA-synt_IIb"/>
</dbReference>
<dbReference type="InterPro" id="IPR006195">
    <property type="entry name" value="aa-tRNA-synth_II"/>
</dbReference>
<dbReference type="InterPro" id="IPR045864">
    <property type="entry name" value="aa-tRNA-synth_II/BPL/LPL"/>
</dbReference>
<dbReference type="InterPro" id="IPR004154">
    <property type="entry name" value="Anticodon-bd"/>
</dbReference>
<dbReference type="InterPro" id="IPR036621">
    <property type="entry name" value="Anticodon-bd_dom_sf"/>
</dbReference>
<dbReference type="InterPro" id="IPR012675">
    <property type="entry name" value="Beta-grasp_dom_sf"/>
</dbReference>
<dbReference type="InterPro" id="IPR004095">
    <property type="entry name" value="TGS"/>
</dbReference>
<dbReference type="InterPro" id="IPR012676">
    <property type="entry name" value="TGS-like"/>
</dbReference>
<dbReference type="InterPro" id="IPR002320">
    <property type="entry name" value="Thr-tRNA-ligase_IIa"/>
</dbReference>
<dbReference type="InterPro" id="IPR018163">
    <property type="entry name" value="Thr/Ala-tRNA-synth_IIc_edit"/>
</dbReference>
<dbReference type="InterPro" id="IPR047246">
    <property type="entry name" value="ThrRS_anticodon"/>
</dbReference>
<dbReference type="InterPro" id="IPR033728">
    <property type="entry name" value="ThrRS_core"/>
</dbReference>
<dbReference type="InterPro" id="IPR012947">
    <property type="entry name" value="tRNA_SAD"/>
</dbReference>
<dbReference type="NCBIfam" id="TIGR00418">
    <property type="entry name" value="thrS"/>
    <property type="match status" value="1"/>
</dbReference>
<dbReference type="PANTHER" id="PTHR11451:SF44">
    <property type="entry name" value="THREONINE--TRNA LIGASE, CHLOROPLASTIC_MITOCHONDRIAL 2"/>
    <property type="match status" value="1"/>
</dbReference>
<dbReference type="PANTHER" id="PTHR11451">
    <property type="entry name" value="THREONINE-TRNA LIGASE"/>
    <property type="match status" value="1"/>
</dbReference>
<dbReference type="Pfam" id="PF03129">
    <property type="entry name" value="HGTP_anticodon"/>
    <property type="match status" value="1"/>
</dbReference>
<dbReference type="Pfam" id="PF02824">
    <property type="entry name" value="TGS"/>
    <property type="match status" value="1"/>
</dbReference>
<dbReference type="Pfam" id="PF00587">
    <property type="entry name" value="tRNA-synt_2b"/>
    <property type="match status" value="1"/>
</dbReference>
<dbReference type="Pfam" id="PF07973">
    <property type="entry name" value="tRNA_SAD"/>
    <property type="match status" value="1"/>
</dbReference>
<dbReference type="PRINTS" id="PR01047">
    <property type="entry name" value="TRNASYNTHTHR"/>
</dbReference>
<dbReference type="SMART" id="SM00863">
    <property type="entry name" value="tRNA_SAD"/>
    <property type="match status" value="1"/>
</dbReference>
<dbReference type="SUPFAM" id="SSF52954">
    <property type="entry name" value="Class II aaRS ABD-related"/>
    <property type="match status" value="1"/>
</dbReference>
<dbReference type="SUPFAM" id="SSF55681">
    <property type="entry name" value="Class II aaRS and biotin synthetases"/>
    <property type="match status" value="1"/>
</dbReference>
<dbReference type="SUPFAM" id="SSF81271">
    <property type="entry name" value="TGS-like"/>
    <property type="match status" value="1"/>
</dbReference>
<dbReference type="SUPFAM" id="SSF55186">
    <property type="entry name" value="ThrRS/AlaRS common domain"/>
    <property type="match status" value="1"/>
</dbReference>
<dbReference type="PROSITE" id="PS50862">
    <property type="entry name" value="AA_TRNA_LIGASE_II"/>
    <property type="match status" value="1"/>
</dbReference>
<dbReference type="PROSITE" id="PS51880">
    <property type="entry name" value="TGS"/>
    <property type="match status" value="1"/>
</dbReference>
<organism>
    <name type="scientific">Burkholderia multivorans (strain ATCC 17616 / 249)</name>
    <dbReference type="NCBI Taxonomy" id="395019"/>
    <lineage>
        <taxon>Bacteria</taxon>
        <taxon>Pseudomonadati</taxon>
        <taxon>Pseudomonadota</taxon>
        <taxon>Betaproteobacteria</taxon>
        <taxon>Burkholderiales</taxon>
        <taxon>Burkholderiaceae</taxon>
        <taxon>Burkholderia</taxon>
        <taxon>Burkholderia cepacia complex</taxon>
    </lineage>
</organism>
<evidence type="ECO:0000255" key="1">
    <source>
        <dbReference type="HAMAP-Rule" id="MF_00184"/>
    </source>
</evidence>
<evidence type="ECO:0000255" key="2">
    <source>
        <dbReference type="PROSITE-ProRule" id="PRU01228"/>
    </source>
</evidence>
<proteinExistence type="inferred from homology"/>
<sequence length="635" mass="72418">MVSIRLPDGSVRQYEHPVTVAEVAASIGPGLAKAALGGKLDGELVDTSAVIDHDASLAIVTDKDPDGLDIIRHSTAHLLAYAVKELYPDAQVTIGPVIDNGFYYDFAYHRPFTPEDLEKIEKRMQELAKKDEPVTRRVVSRDEAAGYFRSIGEKYKAEIIESIPESDEIKLYSHGGFTDLCRGPHVPSTGKLKVFKLMKVAGAYWRGDSKNEQLQRIYGTAWTKKEDQDQYLHMLEEAEKRDHRKLGKQLDLFHMQEESPGMVFWHPKGWALWQQVEQYMRRRVNEAGYLEIKTPMIMDRSLWEASGHWQNYRENMFTTESEKRDYAIKPMNCPGHVQVFKHGLRSYRDLPLRYAEFGSCHRNEASGALHGLMRVRGFVQDDAHIFCTEEQIIAESIAFNKLAMSVYRDFGFDHIDIKLSLRPEQRMGSDETWDRAEQGLREALTACGLQWEELPGEGAFYGPKIEYHIKDALGRSWQCGTLQLDMMLPERLGAEYVAEDNSRRRPVMLHRAIVGSMERFLGILIEHHAGAMPVWLAPVQAVVLNIAESQVEYAQSLAQTLQKQGLRVTADLRNEKISYKIREHTLEKVPYLLVVGDKERDAQTVAVRARGGVDLGVMPVEAFVERLQEDLRSFK</sequence>
<feature type="chain" id="PRO_1000098551" description="Threonine--tRNA ligase">
    <location>
        <begin position="1"/>
        <end position="635"/>
    </location>
</feature>
<feature type="domain" description="TGS" evidence="2">
    <location>
        <begin position="1"/>
        <end position="61"/>
    </location>
</feature>
<feature type="region of interest" description="Catalytic" evidence="1">
    <location>
        <begin position="242"/>
        <end position="533"/>
    </location>
</feature>
<feature type="binding site" evidence="1">
    <location>
        <position position="333"/>
    </location>
    <ligand>
        <name>Zn(2+)</name>
        <dbReference type="ChEBI" id="CHEBI:29105"/>
    </ligand>
</feature>
<feature type="binding site" evidence="1">
    <location>
        <position position="384"/>
    </location>
    <ligand>
        <name>Zn(2+)</name>
        <dbReference type="ChEBI" id="CHEBI:29105"/>
    </ligand>
</feature>
<feature type="binding site" evidence="1">
    <location>
        <position position="510"/>
    </location>
    <ligand>
        <name>Zn(2+)</name>
        <dbReference type="ChEBI" id="CHEBI:29105"/>
    </ligand>
</feature>
<keyword id="KW-0030">Aminoacyl-tRNA synthetase</keyword>
<keyword id="KW-0067">ATP-binding</keyword>
<keyword id="KW-0963">Cytoplasm</keyword>
<keyword id="KW-0436">Ligase</keyword>
<keyword id="KW-0479">Metal-binding</keyword>
<keyword id="KW-0547">Nucleotide-binding</keyword>
<keyword id="KW-0648">Protein biosynthesis</keyword>
<keyword id="KW-1185">Reference proteome</keyword>
<keyword id="KW-0694">RNA-binding</keyword>
<keyword id="KW-0820">tRNA-binding</keyword>
<keyword id="KW-0862">Zinc</keyword>
<comment type="function">
    <text evidence="1">Catalyzes the attachment of threonine to tRNA(Thr) in a two-step reaction: L-threonine is first activated by ATP to form Thr-AMP and then transferred to the acceptor end of tRNA(Thr). Also edits incorrectly charged L-seryl-tRNA(Thr).</text>
</comment>
<comment type="catalytic activity">
    <reaction evidence="1">
        <text>tRNA(Thr) + L-threonine + ATP = L-threonyl-tRNA(Thr) + AMP + diphosphate + H(+)</text>
        <dbReference type="Rhea" id="RHEA:24624"/>
        <dbReference type="Rhea" id="RHEA-COMP:9670"/>
        <dbReference type="Rhea" id="RHEA-COMP:9704"/>
        <dbReference type="ChEBI" id="CHEBI:15378"/>
        <dbReference type="ChEBI" id="CHEBI:30616"/>
        <dbReference type="ChEBI" id="CHEBI:33019"/>
        <dbReference type="ChEBI" id="CHEBI:57926"/>
        <dbReference type="ChEBI" id="CHEBI:78442"/>
        <dbReference type="ChEBI" id="CHEBI:78534"/>
        <dbReference type="ChEBI" id="CHEBI:456215"/>
        <dbReference type="EC" id="6.1.1.3"/>
    </reaction>
</comment>
<comment type="cofactor">
    <cofactor evidence="1">
        <name>Zn(2+)</name>
        <dbReference type="ChEBI" id="CHEBI:29105"/>
    </cofactor>
    <text evidence="1">Binds 1 zinc ion per subunit.</text>
</comment>
<comment type="subunit">
    <text evidence="1">Homodimer.</text>
</comment>
<comment type="subcellular location">
    <subcellularLocation>
        <location evidence="1">Cytoplasm</location>
    </subcellularLocation>
</comment>
<comment type="similarity">
    <text evidence="1">Belongs to the class-II aminoacyl-tRNA synthetase family.</text>
</comment>
<protein>
    <recommendedName>
        <fullName evidence="1">Threonine--tRNA ligase</fullName>
        <ecNumber evidence="1">6.1.1.3</ecNumber>
    </recommendedName>
    <alternativeName>
        <fullName evidence="1">Threonyl-tRNA synthetase</fullName>
        <shortName evidence="1">ThrRS</shortName>
    </alternativeName>
</protein>
<gene>
    <name evidence="1" type="primary">thrS</name>
    <name type="ordered locus">Bmul_1779</name>
    <name type="ordered locus">BMULJ_01461</name>
</gene>
<accession>A9ABF9</accession>
<reference key="1">
    <citation type="submission" date="2007-10" db="EMBL/GenBank/DDBJ databases">
        <title>Complete sequence of chromosome 1 of Burkholderia multivorans ATCC 17616.</title>
        <authorList>
            <person name="Copeland A."/>
            <person name="Lucas S."/>
            <person name="Lapidus A."/>
            <person name="Barry K."/>
            <person name="Glavina del Rio T."/>
            <person name="Dalin E."/>
            <person name="Tice H."/>
            <person name="Pitluck S."/>
            <person name="Chain P."/>
            <person name="Malfatti S."/>
            <person name="Shin M."/>
            <person name="Vergez L."/>
            <person name="Schmutz J."/>
            <person name="Larimer F."/>
            <person name="Land M."/>
            <person name="Hauser L."/>
            <person name="Kyrpides N."/>
            <person name="Kim E."/>
            <person name="Tiedje J."/>
            <person name="Richardson P."/>
        </authorList>
    </citation>
    <scope>NUCLEOTIDE SEQUENCE [LARGE SCALE GENOMIC DNA]</scope>
    <source>
        <strain>ATCC 17616 / 249</strain>
    </source>
</reference>
<reference key="2">
    <citation type="submission" date="2007-04" db="EMBL/GenBank/DDBJ databases">
        <title>Complete genome sequence of Burkholderia multivorans ATCC 17616.</title>
        <authorList>
            <person name="Ohtsubo Y."/>
            <person name="Yamashita A."/>
            <person name="Kurokawa K."/>
            <person name="Takami H."/>
            <person name="Yuhara S."/>
            <person name="Nishiyama E."/>
            <person name="Endo R."/>
            <person name="Miyazaki R."/>
            <person name="Ono A."/>
            <person name="Yano K."/>
            <person name="Ito M."/>
            <person name="Sota M."/>
            <person name="Yuji N."/>
            <person name="Hattori M."/>
            <person name="Tsuda M."/>
        </authorList>
    </citation>
    <scope>NUCLEOTIDE SEQUENCE [LARGE SCALE GENOMIC DNA]</scope>
    <source>
        <strain>ATCC 17616 / 249</strain>
    </source>
</reference>